<keyword id="KW-0963">Cytoplasm</keyword>
<keyword id="KW-0489">Methyltransferase</keyword>
<keyword id="KW-0698">rRNA processing</keyword>
<keyword id="KW-0949">S-adenosyl-L-methionine</keyword>
<keyword id="KW-0808">Transferase</keyword>
<sequence>MATRITNQKLSKSSRAWMREHLDDPFVKKAQKEGYRARAAYKLLEIQEKYRLIKPGMTVVDLGAAPGSWSQIAGKLVGSKGLVIASDILAMDTLPDVTFLQGDFREEEVFEKLLNILNGRTVDIVISDMAPNTSGNRAVDQPRQIYLCELALDFAQKVLGPDGQFVVKVFQGSGFDEFRKQVVDSFDVLKTVKPAASRARSKEVFLIGQGRKKALQ</sequence>
<feature type="chain" id="PRO_0000155463" description="Ribosomal RNA large subunit methyltransferase E">
    <location>
        <begin position="1"/>
        <end position="216"/>
    </location>
</feature>
<feature type="active site" description="Proton acceptor" evidence="1">
    <location>
        <position position="168"/>
    </location>
</feature>
<feature type="binding site" evidence="1">
    <location>
        <position position="67"/>
    </location>
    <ligand>
        <name>S-adenosyl-L-methionine</name>
        <dbReference type="ChEBI" id="CHEBI:59789"/>
    </ligand>
</feature>
<feature type="binding site" evidence="1">
    <location>
        <position position="69"/>
    </location>
    <ligand>
        <name>S-adenosyl-L-methionine</name>
        <dbReference type="ChEBI" id="CHEBI:59789"/>
    </ligand>
</feature>
<feature type="binding site" evidence="1">
    <location>
        <position position="87"/>
    </location>
    <ligand>
        <name>S-adenosyl-L-methionine</name>
        <dbReference type="ChEBI" id="CHEBI:59789"/>
    </ligand>
</feature>
<feature type="binding site" evidence="1">
    <location>
        <position position="103"/>
    </location>
    <ligand>
        <name>S-adenosyl-L-methionine</name>
        <dbReference type="ChEBI" id="CHEBI:59789"/>
    </ligand>
</feature>
<feature type="binding site" evidence="1">
    <location>
        <position position="128"/>
    </location>
    <ligand>
        <name>S-adenosyl-L-methionine</name>
        <dbReference type="ChEBI" id="CHEBI:59789"/>
    </ligand>
</feature>
<accession>Q6F8N1</accession>
<proteinExistence type="inferred from homology"/>
<organism>
    <name type="scientific">Acinetobacter baylyi (strain ATCC 33305 / BD413 / ADP1)</name>
    <dbReference type="NCBI Taxonomy" id="62977"/>
    <lineage>
        <taxon>Bacteria</taxon>
        <taxon>Pseudomonadati</taxon>
        <taxon>Pseudomonadota</taxon>
        <taxon>Gammaproteobacteria</taxon>
        <taxon>Moraxellales</taxon>
        <taxon>Moraxellaceae</taxon>
        <taxon>Acinetobacter</taxon>
    </lineage>
</organism>
<comment type="function">
    <text evidence="1">Specifically methylates the uridine in position 2552 of 23S rRNA at the 2'-O position of the ribose in the fully assembled 50S ribosomal subunit.</text>
</comment>
<comment type="catalytic activity">
    <reaction evidence="1">
        <text>uridine(2552) in 23S rRNA + S-adenosyl-L-methionine = 2'-O-methyluridine(2552) in 23S rRNA + S-adenosyl-L-homocysteine + H(+)</text>
        <dbReference type="Rhea" id="RHEA:42720"/>
        <dbReference type="Rhea" id="RHEA-COMP:10202"/>
        <dbReference type="Rhea" id="RHEA-COMP:10203"/>
        <dbReference type="ChEBI" id="CHEBI:15378"/>
        <dbReference type="ChEBI" id="CHEBI:57856"/>
        <dbReference type="ChEBI" id="CHEBI:59789"/>
        <dbReference type="ChEBI" id="CHEBI:65315"/>
        <dbReference type="ChEBI" id="CHEBI:74478"/>
        <dbReference type="EC" id="2.1.1.166"/>
    </reaction>
</comment>
<comment type="subcellular location">
    <subcellularLocation>
        <location evidence="1">Cytoplasm</location>
    </subcellularLocation>
</comment>
<comment type="similarity">
    <text evidence="1">Belongs to the class I-like SAM-binding methyltransferase superfamily. RNA methyltransferase RlmE family.</text>
</comment>
<dbReference type="EC" id="2.1.1.166" evidence="1"/>
<dbReference type="EMBL" id="CR543861">
    <property type="protein sequence ID" value="CAG69584.1"/>
    <property type="molecule type" value="Genomic_DNA"/>
</dbReference>
<dbReference type="RefSeq" id="WP_004929330.1">
    <property type="nucleotide sequence ID" value="NC_005966.1"/>
</dbReference>
<dbReference type="SMR" id="Q6F8N1"/>
<dbReference type="STRING" id="202950.GCA_001485005_03040"/>
<dbReference type="GeneID" id="45235092"/>
<dbReference type="KEGG" id="aci:ACIAD2854"/>
<dbReference type="eggNOG" id="COG0293">
    <property type="taxonomic scope" value="Bacteria"/>
</dbReference>
<dbReference type="HOGENOM" id="CLU_009422_4_0_6"/>
<dbReference type="OrthoDB" id="9790080at2"/>
<dbReference type="BioCyc" id="ASP62977:ACIAD_RS12885-MONOMER"/>
<dbReference type="Proteomes" id="UP000000430">
    <property type="component" value="Chromosome"/>
</dbReference>
<dbReference type="GO" id="GO:0005737">
    <property type="term" value="C:cytoplasm"/>
    <property type="evidence" value="ECO:0007669"/>
    <property type="project" value="UniProtKB-SubCell"/>
</dbReference>
<dbReference type="GO" id="GO:0008650">
    <property type="term" value="F:rRNA (uridine-2'-O-)-methyltransferase activity"/>
    <property type="evidence" value="ECO:0007669"/>
    <property type="project" value="UniProtKB-UniRule"/>
</dbReference>
<dbReference type="FunFam" id="3.40.50.150:FF:000005">
    <property type="entry name" value="Ribosomal RNA large subunit methyltransferase E"/>
    <property type="match status" value="1"/>
</dbReference>
<dbReference type="Gene3D" id="3.40.50.150">
    <property type="entry name" value="Vaccinia Virus protein VP39"/>
    <property type="match status" value="1"/>
</dbReference>
<dbReference type="HAMAP" id="MF_01547">
    <property type="entry name" value="RNA_methyltr_E"/>
    <property type="match status" value="1"/>
</dbReference>
<dbReference type="InterPro" id="IPR050082">
    <property type="entry name" value="RNA_methyltr_RlmE"/>
</dbReference>
<dbReference type="InterPro" id="IPR002877">
    <property type="entry name" value="RNA_MeTrfase_FtsJ_dom"/>
</dbReference>
<dbReference type="InterPro" id="IPR015507">
    <property type="entry name" value="rRNA-MeTfrase_E"/>
</dbReference>
<dbReference type="InterPro" id="IPR029063">
    <property type="entry name" value="SAM-dependent_MTases_sf"/>
</dbReference>
<dbReference type="NCBIfam" id="NF008390">
    <property type="entry name" value="PRK11188.1"/>
    <property type="match status" value="1"/>
</dbReference>
<dbReference type="PANTHER" id="PTHR10920">
    <property type="entry name" value="RIBOSOMAL RNA METHYLTRANSFERASE"/>
    <property type="match status" value="1"/>
</dbReference>
<dbReference type="PANTHER" id="PTHR10920:SF18">
    <property type="entry name" value="RRNA METHYLTRANSFERASE 2, MITOCHONDRIAL"/>
    <property type="match status" value="1"/>
</dbReference>
<dbReference type="Pfam" id="PF01728">
    <property type="entry name" value="FtsJ"/>
    <property type="match status" value="1"/>
</dbReference>
<dbReference type="PIRSF" id="PIRSF005461">
    <property type="entry name" value="23S_rRNA_mtase"/>
    <property type="match status" value="1"/>
</dbReference>
<dbReference type="SUPFAM" id="SSF53335">
    <property type="entry name" value="S-adenosyl-L-methionine-dependent methyltransferases"/>
    <property type="match status" value="1"/>
</dbReference>
<reference key="1">
    <citation type="journal article" date="2004" name="Nucleic Acids Res.">
        <title>Unique features revealed by the genome sequence of Acinetobacter sp. ADP1, a versatile and naturally transformation competent bacterium.</title>
        <authorList>
            <person name="Barbe V."/>
            <person name="Vallenet D."/>
            <person name="Fonknechten N."/>
            <person name="Kreimeyer A."/>
            <person name="Oztas S."/>
            <person name="Labarre L."/>
            <person name="Cruveiller S."/>
            <person name="Robert C."/>
            <person name="Duprat S."/>
            <person name="Wincker P."/>
            <person name="Ornston L.N."/>
            <person name="Weissenbach J."/>
            <person name="Marliere P."/>
            <person name="Cohen G.N."/>
            <person name="Medigue C."/>
        </authorList>
    </citation>
    <scope>NUCLEOTIDE SEQUENCE [LARGE SCALE GENOMIC DNA]</scope>
    <source>
        <strain>ATCC 33305 / BD413 / ADP1</strain>
    </source>
</reference>
<evidence type="ECO:0000255" key="1">
    <source>
        <dbReference type="HAMAP-Rule" id="MF_01547"/>
    </source>
</evidence>
<protein>
    <recommendedName>
        <fullName evidence="1">Ribosomal RNA large subunit methyltransferase E</fullName>
        <ecNumber evidence="1">2.1.1.166</ecNumber>
    </recommendedName>
    <alternativeName>
        <fullName evidence="1">23S rRNA Um2552 methyltransferase</fullName>
    </alternativeName>
    <alternativeName>
        <fullName evidence="1">rRNA (uridine-2'-O-)-methyltransferase</fullName>
    </alternativeName>
</protein>
<gene>
    <name evidence="1" type="primary">rlmE</name>
    <name evidence="1" type="synonym">ftsJ</name>
    <name evidence="1" type="synonym">rrmJ</name>
    <name type="ordered locus">ACIAD2854</name>
</gene>
<name>RLME_ACIAD</name>